<name>OBG_BURCJ</name>
<feature type="chain" id="PRO_0000385781" description="GTPase Obg">
    <location>
        <begin position="1"/>
        <end position="370"/>
    </location>
</feature>
<feature type="domain" description="Obg" evidence="2">
    <location>
        <begin position="1"/>
        <end position="159"/>
    </location>
</feature>
<feature type="domain" description="OBG-type G" evidence="1">
    <location>
        <begin position="160"/>
        <end position="334"/>
    </location>
</feature>
<feature type="region of interest" description="Disordered" evidence="3">
    <location>
        <begin position="128"/>
        <end position="147"/>
    </location>
</feature>
<feature type="binding site" evidence="1">
    <location>
        <begin position="166"/>
        <end position="173"/>
    </location>
    <ligand>
        <name>GTP</name>
        <dbReference type="ChEBI" id="CHEBI:37565"/>
    </ligand>
</feature>
<feature type="binding site" evidence="1">
    <location>
        <position position="173"/>
    </location>
    <ligand>
        <name>Mg(2+)</name>
        <dbReference type="ChEBI" id="CHEBI:18420"/>
    </ligand>
</feature>
<feature type="binding site" evidence="1">
    <location>
        <begin position="191"/>
        <end position="195"/>
    </location>
    <ligand>
        <name>GTP</name>
        <dbReference type="ChEBI" id="CHEBI:37565"/>
    </ligand>
</feature>
<feature type="binding site" evidence="1">
    <location>
        <position position="193"/>
    </location>
    <ligand>
        <name>Mg(2+)</name>
        <dbReference type="ChEBI" id="CHEBI:18420"/>
    </ligand>
</feature>
<feature type="binding site" evidence="1">
    <location>
        <begin position="213"/>
        <end position="216"/>
    </location>
    <ligand>
        <name>GTP</name>
        <dbReference type="ChEBI" id="CHEBI:37565"/>
    </ligand>
</feature>
<feature type="binding site" evidence="1">
    <location>
        <begin position="284"/>
        <end position="287"/>
    </location>
    <ligand>
        <name>GTP</name>
        <dbReference type="ChEBI" id="CHEBI:37565"/>
    </ligand>
</feature>
<feature type="binding site" evidence="1">
    <location>
        <begin position="315"/>
        <end position="317"/>
    </location>
    <ligand>
        <name>GTP</name>
        <dbReference type="ChEBI" id="CHEBI:37565"/>
    </ligand>
</feature>
<gene>
    <name evidence="1" type="primary">obg</name>
    <name type="ordered locus">BceJ2315_33780</name>
    <name type="ORF">BCAL3440</name>
</gene>
<dbReference type="EC" id="3.6.5.-" evidence="1"/>
<dbReference type="EMBL" id="AM747720">
    <property type="protein sequence ID" value="CAR53763.1"/>
    <property type="molecule type" value="Genomic_DNA"/>
</dbReference>
<dbReference type="SMR" id="B4E5X0"/>
<dbReference type="KEGG" id="bcj:BCAL3440"/>
<dbReference type="eggNOG" id="COG0536">
    <property type="taxonomic scope" value="Bacteria"/>
</dbReference>
<dbReference type="HOGENOM" id="CLU_011747_2_0_4"/>
<dbReference type="BioCyc" id="BCEN216591:G1G1V-3824-MONOMER"/>
<dbReference type="Proteomes" id="UP000001035">
    <property type="component" value="Chromosome 1"/>
</dbReference>
<dbReference type="GO" id="GO:0005737">
    <property type="term" value="C:cytoplasm"/>
    <property type="evidence" value="ECO:0007669"/>
    <property type="project" value="UniProtKB-SubCell"/>
</dbReference>
<dbReference type="GO" id="GO:0005525">
    <property type="term" value="F:GTP binding"/>
    <property type="evidence" value="ECO:0007669"/>
    <property type="project" value="UniProtKB-UniRule"/>
</dbReference>
<dbReference type="GO" id="GO:0003924">
    <property type="term" value="F:GTPase activity"/>
    <property type="evidence" value="ECO:0007669"/>
    <property type="project" value="UniProtKB-UniRule"/>
</dbReference>
<dbReference type="GO" id="GO:0000287">
    <property type="term" value="F:magnesium ion binding"/>
    <property type="evidence" value="ECO:0007669"/>
    <property type="project" value="InterPro"/>
</dbReference>
<dbReference type="GO" id="GO:0042254">
    <property type="term" value="P:ribosome biogenesis"/>
    <property type="evidence" value="ECO:0007669"/>
    <property type="project" value="UniProtKB-UniRule"/>
</dbReference>
<dbReference type="CDD" id="cd01898">
    <property type="entry name" value="Obg"/>
    <property type="match status" value="1"/>
</dbReference>
<dbReference type="FunFam" id="2.70.210.12:FF:000001">
    <property type="entry name" value="GTPase Obg"/>
    <property type="match status" value="1"/>
</dbReference>
<dbReference type="Gene3D" id="2.70.210.12">
    <property type="entry name" value="GTP1/OBG domain"/>
    <property type="match status" value="1"/>
</dbReference>
<dbReference type="Gene3D" id="3.40.50.300">
    <property type="entry name" value="P-loop containing nucleotide triphosphate hydrolases"/>
    <property type="match status" value="1"/>
</dbReference>
<dbReference type="HAMAP" id="MF_01454">
    <property type="entry name" value="GTPase_Obg"/>
    <property type="match status" value="1"/>
</dbReference>
<dbReference type="InterPro" id="IPR031167">
    <property type="entry name" value="G_OBG"/>
</dbReference>
<dbReference type="InterPro" id="IPR006073">
    <property type="entry name" value="GTP-bd"/>
</dbReference>
<dbReference type="InterPro" id="IPR014100">
    <property type="entry name" value="GTP-bd_Obg/CgtA"/>
</dbReference>
<dbReference type="InterPro" id="IPR006074">
    <property type="entry name" value="GTP1-OBG_CS"/>
</dbReference>
<dbReference type="InterPro" id="IPR006169">
    <property type="entry name" value="GTP1_OBG_dom"/>
</dbReference>
<dbReference type="InterPro" id="IPR036726">
    <property type="entry name" value="GTP1_OBG_dom_sf"/>
</dbReference>
<dbReference type="InterPro" id="IPR045086">
    <property type="entry name" value="OBG_GTPase"/>
</dbReference>
<dbReference type="InterPro" id="IPR027417">
    <property type="entry name" value="P-loop_NTPase"/>
</dbReference>
<dbReference type="NCBIfam" id="TIGR02729">
    <property type="entry name" value="Obg_CgtA"/>
    <property type="match status" value="1"/>
</dbReference>
<dbReference type="NCBIfam" id="NF008954">
    <property type="entry name" value="PRK12296.1"/>
    <property type="match status" value="1"/>
</dbReference>
<dbReference type="NCBIfam" id="NF008955">
    <property type="entry name" value="PRK12297.1"/>
    <property type="match status" value="1"/>
</dbReference>
<dbReference type="NCBIfam" id="NF008956">
    <property type="entry name" value="PRK12299.1"/>
    <property type="match status" value="1"/>
</dbReference>
<dbReference type="PANTHER" id="PTHR11702">
    <property type="entry name" value="DEVELOPMENTALLY REGULATED GTP-BINDING PROTEIN-RELATED"/>
    <property type="match status" value="1"/>
</dbReference>
<dbReference type="PANTHER" id="PTHR11702:SF31">
    <property type="entry name" value="MITOCHONDRIAL RIBOSOME-ASSOCIATED GTPASE 2"/>
    <property type="match status" value="1"/>
</dbReference>
<dbReference type="Pfam" id="PF01018">
    <property type="entry name" value="GTP1_OBG"/>
    <property type="match status" value="1"/>
</dbReference>
<dbReference type="Pfam" id="PF01926">
    <property type="entry name" value="MMR_HSR1"/>
    <property type="match status" value="1"/>
</dbReference>
<dbReference type="PIRSF" id="PIRSF002401">
    <property type="entry name" value="GTP_bd_Obg/CgtA"/>
    <property type="match status" value="1"/>
</dbReference>
<dbReference type="PRINTS" id="PR00326">
    <property type="entry name" value="GTP1OBG"/>
</dbReference>
<dbReference type="SUPFAM" id="SSF82051">
    <property type="entry name" value="Obg GTP-binding protein N-terminal domain"/>
    <property type="match status" value="1"/>
</dbReference>
<dbReference type="SUPFAM" id="SSF52540">
    <property type="entry name" value="P-loop containing nucleoside triphosphate hydrolases"/>
    <property type="match status" value="1"/>
</dbReference>
<dbReference type="PROSITE" id="PS51710">
    <property type="entry name" value="G_OBG"/>
    <property type="match status" value="1"/>
</dbReference>
<dbReference type="PROSITE" id="PS00905">
    <property type="entry name" value="GTP1_OBG"/>
    <property type="match status" value="1"/>
</dbReference>
<dbReference type="PROSITE" id="PS51883">
    <property type="entry name" value="OBG"/>
    <property type="match status" value="1"/>
</dbReference>
<sequence>MKFIDEARIEVIAGDGGDGSASMRREKFVPFGGPDGGDGGRGGSVYAIADRNINTLIDYRYAKKHLARNGENGRGSDCYGKGGDDVTLRMPVGTIISDMDTGELIADLTEHDQRVMLAQGGAGGLGNLHFKSSTNRAPRQKTDGKPGERRMLKLELKVLADVGLLGMPNAGKSTFISSVSNAKPKIADYPFTTLAPNLGVVRVGPSKSFVIADIPGLIEGAAEGAGLGHQFLRHLQRTGVLLHLVDLAPFDESVDPVAEATAIVGELRKYDEALYEKPRWLVLNKLDMVPEDEREARVADFLDRFGWDGPVFEISALTGQGCEALCYAIYDYLSEHSDAHRAAEAEDLAADVRFRDAPPAKGGATPGDDA</sequence>
<comment type="function">
    <text evidence="1">An essential GTPase which binds GTP, GDP and possibly (p)ppGpp with moderate affinity, with high nucleotide exchange rates and a fairly low GTP hydrolysis rate. Plays a role in control of the cell cycle, stress response, ribosome biogenesis and in those bacteria that undergo differentiation, in morphogenesis control.</text>
</comment>
<comment type="cofactor">
    <cofactor evidence="1">
        <name>Mg(2+)</name>
        <dbReference type="ChEBI" id="CHEBI:18420"/>
    </cofactor>
</comment>
<comment type="subunit">
    <text evidence="1">Monomer.</text>
</comment>
<comment type="subcellular location">
    <subcellularLocation>
        <location evidence="1">Cytoplasm</location>
    </subcellularLocation>
</comment>
<comment type="similarity">
    <text evidence="1">Belongs to the TRAFAC class OBG-HflX-like GTPase superfamily. OBG GTPase family.</text>
</comment>
<protein>
    <recommendedName>
        <fullName evidence="1">GTPase Obg</fullName>
        <ecNumber evidence="1">3.6.5.-</ecNumber>
    </recommendedName>
    <alternativeName>
        <fullName evidence="1">GTP-binding protein Obg</fullName>
    </alternativeName>
</protein>
<organism>
    <name type="scientific">Burkholderia cenocepacia (strain ATCC BAA-245 / DSM 16553 / LMG 16656 / NCTC 13227 / J2315 / CF5610)</name>
    <name type="common">Burkholderia cepacia (strain J2315)</name>
    <dbReference type="NCBI Taxonomy" id="216591"/>
    <lineage>
        <taxon>Bacteria</taxon>
        <taxon>Pseudomonadati</taxon>
        <taxon>Pseudomonadota</taxon>
        <taxon>Betaproteobacteria</taxon>
        <taxon>Burkholderiales</taxon>
        <taxon>Burkholderiaceae</taxon>
        <taxon>Burkholderia</taxon>
        <taxon>Burkholderia cepacia complex</taxon>
    </lineage>
</organism>
<proteinExistence type="inferred from homology"/>
<evidence type="ECO:0000255" key="1">
    <source>
        <dbReference type="HAMAP-Rule" id="MF_01454"/>
    </source>
</evidence>
<evidence type="ECO:0000255" key="2">
    <source>
        <dbReference type="PROSITE-ProRule" id="PRU01231"/>
    </source>
</evidence>
<evidence type="ECO:0000256" key="3">
    <source>
        <dbReference type="SAM" id="MobiDB-lite"/>
    </source>
</evidence>
<accession>B4E5X0</accession>
<reference key="1">
    <citation type="journal article" date="2009" name="J. Bacteriol.">
        <title>The genome of Burkholderia cenocepacia J2315, an epidemic pathogen of cystic fibrosis patients.</title>
        <authorList>
            <person name="Holden M.T."/>
            <person name="Seth-Smith H.M."/>
            <person name="Crossman L.C."/>
            <person name="Sebaihia M."/>
            <person name="Bentley S.D."/>
            <person name="Cerdeno-Tarraga A.M."/>
            <person name="Thomson N.R."/>
            <person name="Bason N."/>
            <person name="Quail M.A."/>
            <person name="Sharp S."/>
            <person name="Cherevach I."/>
            <person name="Churcher C."/>
            <person name="Goodhead I."/>
            <person name="Hauser H."/>
            <person name="Holroyd N."/>
            <person name="Mungall K."/>
            <person name="Scott P."/>
            <person name="Walker D."/>
            <person name="White B."/>
            <person name="Rose H."/>
            <person name="Iversen P."/>
            <person name="Mil-Homens D."/>
            <person name="Rocha E.P."/>
            <person name="Fialho A.M."/>
            <person name="Baldwin A."/>
            <person name="Dowson C."/>
            <person name="Barrell B.G."/>
            <person name="Govan J.R."/>
            <person name="Vandamme P."/>
            <person name="Hart C.A."/>
            <person name="Mahenthiralingam E."/>
            <person name="Parkhill J."/>
        </authorList>
    </citation>
    <scope>NUCLEOTIDE SEQUENCE [LARGE SCALE GENOMIC DNA]</scope>
    <source>
        <strain>ATCC BAA-245 / DSM 16553 / LMG 16656 / NCTC 13227 / J2315 / CF5610</strain>
    </source>
</reference>
<keyword id="KW-0963">Cytoplasm</keyword>
<keyword id="KW-0342">GTP-binding</keyword>
<keyword id="KW-0378">Hydrolase</keyword>
<keyword id="KW-0460">Magnesium</keyword>
<keyword id="KW-0479">Metal-binding</keyword>
<keyword id="KW-0547">Nucleotide-binding</keyword>